<comment type="function">
    <text evidence="1">Component of the molecular motor that translocates viral genomic DNA in empty capsid during DNA packaging. Forms a tripartite terminase complex together with TRM1 and TRM3 in the host cytoplasm. Once the complex reaches the host nucleus, it interacts with the capsid portal vertex. This portal forms a ring in which genomic DNA is translocated into the capsid.</text>
</comment>
<comment type="subunit">
    <text evidence="1">Associates with TRM1 and TRM3 to form the tripartite terminase complex.</text>
</comment>
<comment type="subcellular location">
    <subcellularLocation>
        <location evidence="1">Host nucleus</location>
    </subcellularLocation>
    <text evidence="1">Found associated with the external surface of the viral capsid during assembly and DNA packaging, but seems absent in extracellular mature virions.</text>
</comment>
<comment type="similarity">
    <text evidence="1">Belongs to the herpesviridae TRM2 protein family.</text>
</comment>
<comment type="sequence caution" evidence="2">
    <conflict type="erroneous initiation">
        <sequence resource="EMBL-CDS" id="AAA16742"/>
    </conflict>
    <text>Extended N-terminus.</text>
</comment>
<gene>
    <name evidence="1" type="primary">TRM2</name>
    <name type="ordered locus">U35</name>
    <name type="ordered locus">XILF1</name>
</gene>
<reference key="1">
    <citation type="journal article" date="1994" name="J. Virol.">
        <title>Nucleotide sequence analysis of a 38.5-kilobase-pair region of the genome of human herpesvirus 6 encoding human cytomegalovirus immediate-early gene homologs and transactivating functions.</title>
        <authorList>
            <person name="Nicholas J."/>
            <person name="Martin M.E.D."/>
        </authorList>
    </citation>
    <scope>NUCLEOTIDE SEQUENCE [GENOMIC DNA]</scope>
</reference>
<reference key="2">
    <citation type="journal article" date="1995" name="Virology">
        <title>The DNA sequence of human herpesvirus-6: structure, coding content, and genome evolution.</title>
        <authorList>
            <person name="Gompels U.A."/>
            <person name="Nicholas J."/>
            <person name="Lawrence G.L."/>
            <person name="Jones M."/>
            <person name="Thomson B.J."/>
            <person name="Martin M.E.D."/>
            <person name="Efstathiou S."/>
            <person name="Craxton M.A."/>
            <person name="Macaulay H.A."/>
        </authorList>
    </citation>
    <scope>NUCLEOTIDE SEQUENCE [LARGE SCALE GENOMIC DNA]</scope>
</reference>
<protein>
    <recommendedName>
        <fullName evidence="1">Tripartite terminase subunit 2</fullName>
    </recommendedName>
</protein>
<accession>Q69561</accession>
<accession>Q69058</accession>
<organism>
    <name type="scientific">Human herpesvirus 6A (strain Uganda-1102)</name>
    <name type="common">HHV-6 variant A</name>
    <name type="synonym">Human B lymphotropic virus</name>
    <dbReference type="NCBI Taxonomy" id="10370"/>
    <lineage>
        <taxon>Viruses</taxon>
        <taxon>Duplodnaviria</taxon>
        <taxon>Heunggongvirae</taxon>
        <taxon>Peploviricota</taxon>
        <taxon>Herviviricetes</taxon>
        <taxon>Herpesvirales</taxon>
        <taxon>Orthoherpesviridae</taxon>
        <taxon>Betaherpesvirinae</taxon>
        <taxon>Roseolovirus</taxon>
        <taxon>Roseolovirus humanbeta6a</taxon>
        <taxon>Human betaherpesvirus 6A</taxon>
    </lineage>
</organism>
<feature type="chain" id="PRO_0000342586" description="Tripartite terminase subunit 2">
    <location>
        <begin position="1"/>
        <end position="106"/>
    </location>
</feature>
<evidence type="ECO:0000255" key="1">
    <source>
        <dbReference type="HAMAP-Rule" id="MF_04015"/>
    </source>
</evidence>
<evidence type="ECO:0000305" key="2"/>
<dbReference type="EMBL" id="L25528">
    <property type="protein sequence ID" value="AAA16742.1"/>
    <property type="status" value="ALT_INIT"/>
    <property type="molecule type" value="Genomic_DNA"/>
</dbReference>
<dbReference type="EMBL" id="X83413">
    <property type="protein sequence ID" value="CAA58415.1"/>
    <property type="molecule type" value="Genomic_DNA"/>
</dbReference>
<dbReference type="PIR" id="T09329">
    <property type="entry name" value="T09329"/>
</dbReference>
<dbReference type="RefSeq" id="NP_042928.1">
    <property type="nucleotide sequence ID" value="NC_001664.2"/>
</dbReference>
<dbReference type="SMR" id="Q69561"/>
<dbReference type="DNASU" id="1487913"/>
<dbReference type="GeneID" id="1487913"/>
<dbReference type="KEGG" id="vg:1487913"/>
<dbReference type="Proteomes" id="UP000009295">
    <property type="component" value="Segment"/>
</dbReference>
<dbReference type="GO" id="GO:0042025">
    <property type="term" value="C:host cell nucleus"/>
    <property type="evidence" value="ECO:0007669"/>
    <property type="project" value="UniProtKB-SubCell"/>
</dbReference>
<dbReference type="GO" id="GO:0019073">
    <property type="term" value="P:viral DNA genome packaging"/>
    <property type="evidence" value="ECO:0007669"/>
    <property type="project" value="InterPro"/>
</dbReference>
<dbReference type="HAMAP" id="MF_04015">
    <property type="entry name" value="HSV_TRM2"/>
    <property type="match status" value="1"/>
</dbReference>
<dbReference type="InterPro" id="IPR005208">
    <property type="entry name" value="Herpes_TT2"/>
</dbReference>
<dbReference type="Pfam" id="PF03581">
    <property type="entry name" value="Herpes_UL33"/>
    <property type="match status" value="1"/>
</dbReference>
<keyword id="KW-1048">Host nucleus</keyword>
<keyword id="KW-1185">Reference proteome</keyword>
<keyword id="KW-0231">Viral genome packaging</keyword>
<keyword id="KW-1188">Viral release from host cell</keyword>
<name>TRM2_HHV6U</name>
<sequence length="106" mass="12440">MMDSSPEKTNLELLYERVCEQGREFEVVFYPMLPRLYEMMLPSLEARLNFLSVGYRHVAFARYVHGDVDCVHREVMAQKMVLLTSILSKLLNVNGILEHQEYLNTE</sequence>
<proteinExistence type="inferred from homology"/>
<organismHost>
    <name type="scientific">Homo sapiens</name>
    <name type="common">Human</name>
    <dbReference type="NCBI Taxonomy" id="9606"/>
</organismHost>